<dbReference type="EMBL" id="U28374">
    <property type="protein sequence ID" value="AAB64735.1"/>
    <property type="molecule type" value="Genomic_DNA"/>
</dbReference>
<dbReference type="EMBL" id="AY723789">
    <property type="protein sequence ID" value="AAU09706.1"/>
    <property type="molecule type" value="Genomic_DNA"/>
</dbReference>
<dbReference type="EMBL" id="BK006938">
    <property type="protein sequence ID" value="DAA12138.1"/>
    <property type="molecule type" value="Genomic_DNA"/>
</dbReference>
<dbReference type="PIR" id="S61185">
    <property type="entry name" value="S61185"/>
</dbReference>
<dbReference type="RefSeq" id="NP_010585.3">
    <property type="nucleotide sequence ID" value="NM_001180607.3"/>
</dbReference>
<dbReference type="PDB" id="6LQP">
    <property type="method" value="EM"/>
    <property type="resolution" value="3.20 A"/>
    <property type="chains" value="RY=1-534"/>
</dbReference>
<dbReference type="PDB" id="6LQQ">
    <property type="method" value="EM"/>
    <property type="resolution" value="4.10 A"/>
    <property type="chains" value="RY=1-534"/>
</dbReference>
<dbReference type="PDB" id="6LQR">
    <property type="method" value="EM"/>
    <property type="resolution" value="8.60 A"/>
    <property type="chains" value="RY=1-534"/>
</dbReference>
<dbReference type="PDB" id="6LQU">
    <property type="method" value="EM"/>
    <property type="resolution" value="3.70 A"/>
    <property type="chains" value="RY=1-534"/>
</dbReference>
<dbReference type="PDB" id="6LQV">
    <property type="method" value="EM"/>
    <property type="resolution" value="4.80 A"/>
    <property type="chains" value="RY=1-534"/>
</dbReference>
<dbReference type="PDB" id="6ZQB">
    <property type="method" value="EM"/>
    <property type="resolution" value="3.90 A"/>
    <property type="chains" value="JK=1-534"/>
</dbReference>
<dbReference type="PDB" id="6ZQC">
    <property type="method" value="EM"/>
    <property type="resolution" value="3.80 A"/>
    <property type="chains" value="JK=1-534"/>
</dbReference>
<dbReference type="PDB" id="7AJT">
    <property type="method" value="EM"/>
    <property type="resolution" value="4.60 A"/>
    <property type="chains" value="JK=1-534"/>
</dbReference>
<dbReference type="PDB" id="7D63">
    <property type="method" value="EM"/>
    <property type="resolution" value="12.30 A"/>
    <property type="chains" value="RY=1-534"/>
</dbReference>
<dbReference type="PDB" id="7SUK">
    <property type="method" value="EM"/>
    <property type="resolution" value="3.99 A"/>
    <property type="chains" value="5=1-534"/>
</dbReference>
<dbReference type="PDBsum" id="6LQP"/>
<dbReference type="PDBsum" id="6LQQ"/>
<dbReference type="PDBsum" id="6LQR"/>
<dbReference type="PDBsum" id="6LQU"/>
<dbReference type="PDBsum" id="6LQV"/>
<dbReference type="PDBsum" id="6ZQB"/>
<dbReference type="PDBsum" id="6ZQC"/>
<dbReference type="PDBsum" id="7AJT"/>
<dbReference type="PDBsum" id="7D63"/>
<dbReference type="PDBsum" id="7SUK"/>
<dbReference type="EMDB" id="EMD-0949"/>
<dbReference type="EMDB" id="EMD-0950"/>
<dbReference type="EMDB" id="EMD-0951"/>
<dbReference type="EMDB" id="EMD-0954"/>
<dbReference type="EMDB" id="EMD-0955"/>
<dbReference type="EMDB" id="EMD-11358"/>
<dbReference type="EMDB" id="EMD-11359"/>
<dbReference type="EMDB" id="EMD-11807"/>
<dbReference type="EMDB" id="EMD-25441"/>
<dbReference type="EMDB" id="EMD-30588"/>
<dbReference type="SMR" id="Q06631"/>
<dbReference type="BioGRID" id="32351">
    <property type="interactions" value="198"/>
</dbReference>
<dbReference type="DIP" id="DIP-1411N"/>
<dbReference type="FunCoup" id="Q06631">
    <property type="interactions" value="1122"/>
</dbReference>
<dbReference type="IntAct" id="Q06631">
    <property type="interactions" value="107"/>
</dbReference>
<dbReference type="MINT" id="Q06631"/>
<dbReference type="STRING" id="4932.YDR299W"/>
<dbReference type="iPTMnet" id="Q06631"/>
<dbReference type="PaxDb" id="4932-YDR299W"/>
<dbReference type="PeptideAtlas" id="Q06631"/>
<dbReference type="EnsemblFungi" id="YDR299W_mRNA">
    <property type="protein sequence ID" value="YDR299W"/>
    <property type="gene ID" value="YDR299W"/>
</dbReference>
<dbReference type="GeneID" id="851893"/>
<dbReference type="KEGG" id="sce:YDR299W"/>
<dbReference type="AGR" id="SGD:S000002707"/>
<dbReference type="SGD" id="S000002707">
    <property type="gene designation" value="BFR2"/>
</dbReference>
<dbReference type="VEuPathDB" id="FungiDB:YDR299W"/>
<dbReference type="eggNOG" id="KOG2773">
    <property type="taxonomic scope" value="Eukaryota"/>
</dbReference>
<dbReference type="GeneTree" id="ENSGT00390000000288"/>
<dbReference type="HOGENOM" id="CLU_018299_2_2_1"/>
<dbReference type="InParanoid" id="Q06631"/>
<dbReference type="OMA" id="INFMAPN"/>
<dbReference type="OrthoDB" id="5783963at2759"/>
<dbReference type="BioCyc" id="YEAST:G3O-29860-MONOMER"/>
<dbReference type="BioGRID-ORCS" id="851893">
    <property type="hits" value="1 hit in 10 CRISPR screens"/>
</dbReference>
<dbReference type="CD-CODE" id="BDAE0F88">
    <property type="entry name" value="Nucleolus"/>
</dbReference>
<dbReference type="PRO" id="PR:Q06631"/>
<dbReference type="Proteomes" id="UP000002311">
    <property type="component" value="Chromosome IV"/>
</dbReference>
<dbReference type="RNAct" id="Q06631">
    <property type="molecule type" value="protein"/>
</dbReference>
<dbReference type="GO" id="GO:0030686">
    <property type="term" value="C:90S preribosome"/>
    <property type="evidence" value="ECO:0007005"/>
    <property type="project" value="SGD"/>
</dbReference>
<dbReference type="GO" id="GO:0005730">
    <property type="term" value="C:nucleolus"/>
    <property type="evidence" value="ECO:0000314"/>
    <property type="project" value="SGD"/>
</dbReference>
<dbReference type="GO" id="GO:0032040">
    <property type="term" value="C:small-subunit processome"/>
    <property type="evidence" value="ECO:0000315"/>
    <property type="project" value="SGD"/>
</dbReference>
<dbReference type="GO" id="GO:0000462">
    <property type="term" value="P:maturation of SSU-rRNA from tricistronic rRNA transcript (SSU-rRNA, 5.8S rRNA, LSU-rRNA)"/>
    <property type="evidence" value="ECO:0000315"/>
    <property type="project" value="SGD"/>
</dbReference>
<dbReference type="GO" id="GO:0015031">
    <property type="term" value="P:protein transport"/>
    <property type="evidence" value="ECO:0007669"/>
    <property type="project" value="UniProtKB-KW"/>
</dbReference>
<dbReference type="GO" id="GO:0006364">
    <property type="term" value="P:rRNA processing"/>
    <property type="evidence" value="ECO:0000315"/>
    <property type="project" value="SGD"/>
</dbReference>
<dbReference type="GO" id="GO:0016192">
    <property type="term" value="P:vesicle-mediated transport"/>
    <property type="evidence" value="ECO:0007669"/>
    <property type="project" value="UniProtKB-KW"/>
</dbReference>
<dbReference type="InterPro" id="IPR025160">
    <property type="entry name" value="AATF"/>
</dbReference>
<dbReference type="InterPro" id="IPR039223">
    <property type="entry name" value="AATF/Bfr2"/>
</dbReference>
<dbReference type="InterPro" id="IPR012617">
    <property type="entry name" value="AATF_C"/>
</dbReference>
<dbReference type="PANTHER" id="PTHR15565">
    <property type="entry name" value="AATF PROTEIN APOPTOSIS ANTAGONIZING TRANSCRIPTION FACTOR"/>
    <property type="match status" value="1"/>
</dbReference>
<dbReference type="PANTHER" id="PTHR15565:SF0">
    <property type="entry name" value="PROTEIN AATF"/>
    <property type="match status" value="1"/>
</dbReference>
<dbReference type="Pfam" id="PF13339">
    <property type="entry name" value="AATF-Che1"/>
    <property type="match status" value="1"/>
</dbReference>
<dbReference type="Pfam" id="PF08164">
    <property type="entry name" value="TRAUB"/>
    <property type="match status" value="1"/>
</dbReference>
<reference key="1">
    <citation type="journal article" date="1997" name="Nature">
        <title>The nucleotide sequence of Saccharomyces cerevisiae chromosome IV.</title>
        <authorList>
            <person name="Jacq C."/>
            <person name="Alt-Moerbe J."/>
            <person name="Andre B."/>
            <person name="Arnold W."/>
            <person name="Bahr A."/>
            <person name="Ballesta J.P.G."/>
            <person name="Bargues M."/>
            <person name="Baron L."/>
            <person name="Becker A."/>
            <person name="Biteau N."/>
            <person name="Bloecker H."/>
            <person name="Blugeon C."/>
            <person name="Boskovic J."/>
            <person name="Brandt P."/>
            <person name="Brueckner M."/>
            <person name="Buitrago M.J."/>
            <person name="Coster F."/>
            <person name="Delaveau T."/>
            <person name="del Rey F."/>
            <person name="Dujon B."/>
            <person name="Eide L.G."/>
            <person name="Garcia-Cantalejo J.M."/>
            <person name="Goffeau A."/>
            <person name="Gomez-Peris A."/>
            <person name="Granotier C."/>
            <person name="Hanemann V."/>
            <person name="Hankeln T."/>
            <person name="Hoheisel J.D."/>
            <person name="Jaeger W."/>
            <person name="Jimenez A."/>
            <person name="Jonniaux J.-L."/>
            <person name="Kraemer C."/>
            <person name="Kuester H."/>
            <person name="Laamanen P."/>
            <person name="Legros Y."/>
            <person name="Louis E.J."/>
            <person name="Moeller-Rieker S."/>
            <person name="Monnet A."/>
            <person name="Moro M."/>
            <person name="Mueller-Auer S."/>
            <person name="Nussbaumer B."/>
            <person name="Paricio N."/>
            <person name="Paulin L."/>
            <person name="Perea J."/>
            <person name="Perez-Alonso M."/>
            <person name="Perez-Ortin J.E."/>
            <person name="Pohl T.M."/>
            <person name="Prydz H."/>
            <person name="Purnelle B."/>
            <person name="Rasmussen S.W."/>
            <person name="Remacha M.A."/>
            <person name="Revuelta J.L."/>
            <person name="Rieger M."/>
            <person name="Salom D."/>
            <person name="Saluz H.P."/>
            <person name="Saiz J.E."/>
            <person name="Saren A.-M."/>
            <person name="Schaefer M."/>
            <person name="Scharfe M."/>
            <person name="Schmidt E.R."/>
            <person name="Schneider C."/>
            <person name="Scholler P."/>
            <person name="Schwarz S."/>
            <person name="Soler-Mira A."/>
            <person name="Urrestarazu L.A."/>
            <person name="Verhasselt P."/>
            <person name="Vissers S."/>
            <person name="Voet M."/>
            <person name="Volckaert G."/>
            <person name="Wagner G."/>
            <person name="Wambutt R."/>
            <person name="Wedler E."/>
            <person name="Wedler H."/>
            <person name="Woelfl S."/>
            <person name="Harris D.E."/>
            <person name="Bowman S."/>
            <person name="Brown D."/>
            <person name="Churcher C.M."/>
            <person name="Connor R."/>
            <person name="Dedman K."/>
            <person name="Gentles S."/>
            <person name="Hamlin N."/>
            <person name="Hunt S."/>
            <person name="Jones L."/>
            <person name="McDonald S."/>
            <person name="Murphy L.D."/>
            <person name="Niblett D."/>
            <person name="Odell C."/>
            <person name="Oliver K."/>
            <person name="Rajandream M.A."/>
            <person name="Richards C."/>
            <person name="Shore L."/>
            <person name="Walsh S.V."/>
            <person name="Barrell B.G."/>
            <person name="Dietrich F.S."/>
            <person name="Mulligan J.T."/>
            <person name="Allen E."/>
            <person name="Araujo R."/>
            <person name="Aviles E."/>
            <person name="Berno A."/>
            <person name="Carpenter J."/>
            <person name="Chen E."/>
            <person name="Cherry J.M."/>
            <person name="Chung E."/>
            <person name="Duncan M."/>
            <person name="Hunicke-Smith S."/>
            <person name="Hyman R.W."/>
            <person name="Komp C."/>
            <person name="Lashkari D."/>
            <person name="Lew H."/>
            <person name="Lin D."/>
            <person name="Mosedale D."/>
            <person name="Nakahara K."/>
            <person name="Namath A."/>
            <person name="Oefner P."/>
            <person name="Oh C."/>
            <person name="Petel F.X."/>
            <person name="Roberts D."/>
            <person name="Schramm S."/>
            <person name="Schroeder M."/>
            <person name="Shogren T."/>
            <person name="Shroff N."/>
            <person name="Winant A."/>
            <person name="Yelton M.A."/>
            <person name="Botstein D."/>
            <person name="Davis R.W."/>
            <person name="Johnston M."/>
            <person name="Andrews S."/>
            <person name="Brinkman R."/>
            <person name="Cooper J."/>
            <person name="Ding H."/>
            <person name="Du Z."/>
            <person name="Favello A."/>
            <person name="Fulton L."/>
            <person name="Gattung S."/>
            <person name="Greco T."/>
            <person name="Hallsworth K."/>
            <person name="Hawkins J."/>
            <person name="Hillier L.W."/>
            <person name="Jier M."/>
            <person name="Johnson D."/>
            <person name="Johnston L."/>
            <person name="Kirsten J."/>
            <person name="Kucaba T."/>
            <person name="Langston Y."/>
            <person name="Latreille P."/>
            <person name="Le T."/>
            <person name="Mardis E."/>
            <person name="Menezes S."/>
            <person name="Miller N."/>
            <person name="Nhan M."/>
            <person name="Pauley A."/>
            <person name="Peluso D."/>
            <person name="Rifkin L."/>
            <person name="Riles L."/>
            <person name="Taich A."/>
            <person name="Trevaskis E."/>
            <person name="Vignati D."/>
            <person name="Wilcox L."/>
            <person name="Wohldman P."/>
            <person name="Vaudin M."/>
            <person name="Wilson R."/>
            <person name="Waterston R."/>
            <person name="Albermann K."/>
            <person name="Hani J."/>
            <person name="Heumann K."/>
            <person name="Kleine K."/>
            <person name="Mewes H.-W."/>
            <person name="Zollner A."/>
            <person name="Zaccaria P."/>
        </authorList>
    </citation>
    <scope>NUCLEOTIDE SEQUENCE [LARGE SCALE GENOMIC DNA]</scope>
    <source>
        <strain>ATCC 204508 / S288c</strain>
    </source>
</reference>
<reference key="2">
    <citation type="journal article" date="2014" name="G3 (Bethesda)">
        <title>The reference genome sequence of Saccharomyces cerevisiae: Then and now.</title>
        <authorList>
            <person name="Engel S.R."/>
            <person name="Dietrich F.S."/>
            <person name="Fisk D.G."/>
            <person name="Binkley G."/>
            <person name="Balakrishnan R."/>
            <person name="Costanzo M.C."/>
            <person name="Dwight S.S."/>
            <person name="Hitz B.C."/>
            <person name="Karra K."/>
            <person name="Nash R.S."/>
            <person name="Weng S."/>
            <person name="Wong E.D."/>
            <person name="Lloyd P."/>
            <person name="Skrzypek M.S."/>
            <person name="Miyasato S.R."/>
            <person name="Simison M."/>
            <person name="Cherry J.M."/>
        </authorList>
    </citation>
    <scope>GENOME REANNOTATION</scope>
    <source>
        <strain>ATCC 204508 / S288c</strain>
    </source>
</reference>
<reference key="3">
    <citation type="journal article" date="2007" name="Genome Res.">
        <title>Approaching a complete repository of sequence-verified protein-encoding clones for Saccharomyces cerevisiae.</title>
        <authorList>
            <person name="Hu Y."/>
            <person name="Rolfs A."/>
            <person name="Bhullar B."/>
            <person name="Murthy T.V.S."/>
            <person name="Zhu C."/>
            <person name="Berger M.F."/>
            <person name="Camargo A.A."/>
            <person name="Kelley F."/>
            <person name="McCarron S."/>
            <person name="Jepson D."/>
            <person name="Richardson A."/>
            <person name="Raphael J."/>
            <person name="Moreira D."/>
            <person name="Taycher E."/>
            <person name="Zuo D."/>
            <person name="Mohr S."/>
            <person name="Kane M.F."/>
            <person name="Williamson J."/>
            <person name="Simpson A.J.G."/>
            <person name="Bulyk M.L."/>
            <person name="Harlow E."/>
            <person name="Marsischky G."/>
            <person name="Kolodner R.D."/>
            <person name="LaBaer J."/>
        </authorList>
    </citation>
    <scope>NUCLEOTIDE SEQUENCE [GENOMIC DNA]</scope>
    <source>
        <strain>ATCC 204508 / S288c</strain>
    </source>
</reference>
<reference key="4">
    <citation type="journal article" date="1998" name="Curr. Genet.">
        <title>Over-expression of the yeast BFR2 gene partially suppresses the growth defects induced by Brefeldin A and by four ER-to-Golgi mutations.</title>
        <authorList>
            <person name="Chabane S."/>
            <person name="Gachet E."/>
            <person name="Kepes F."/>
        </authorList>
    </citation>
    <scope>FUNCTION</scope>
</reference>
<reference key="5">
    <citation type="journal article" date="1998" name="Mol. Gen. Genet.">
        <title>Expression of the yeast BFR2 gene is regulated at the transcriptional level and through degradation of its product.</title>
        <authorList>
            <person name="Chabane S."/>
            <person name="Kepes F."/>
        </authorList>
    </citation>
    <scope>INDUCTION</scope>
</reference>
<reference key="6">
    <citation type="journal article" date="2003" name="Mol. Cell">
        <title>Assigning function to yeast proteins by integration of technologies.</title>
        <authorList>
            <person name="Hazbun T.R."/>
            <person name="Malmstroem L."/>
            <person name="Anderson S."/>
            <person name="Graczyk B.J."/>
            <person name="Fox B."/>
            <person name="Riffle M."/>
            <person name="Sundin B.A."/>
            <person name="Aranda J.D."/>
            <person name="McDonald W.H."/>
            <person name="Chiu C.-H."/>
            <person name="Snydsman B.E."/>
            <person name="Bradley P."/>
            <person name="Muller E.G.D."/>
            <person name="Fields S."/>
            <person name="Baker D."/>
            <person name="Yates J.R. III"/>
            <person name="Davis T.N."/>
        </authorList>
    </citation>
    <scope>IDENTIFICATION BY MASS SPECTROMETRY</scope>
</reference>
<reference key="7">
    <citation type="journal article" date="2003" name="Nature">
        <title>Global analysis of protein localization in budding yeast.</title>
        <authorList>
            <person name="Huh W.-K."/>
            <person name="Falvo J.V."/>
            <person name="Gerke L.C."/>
            <person name="Carroll A.S."/>
            <person name="Howson R.W."/>
            <person name="Weissman J.S."/>
            <person name="O'Shea E.K."/>
        </authorList>
    </citation>
    <scope>SUBCELLULAR LOCATION [LARGE SCALE ANALYSIS]</scope>
</reference>
<reference key="8">
    <citation type="journal article" date="2003" name="Nature">
        <title>Global analysis of protein expression in yeast.</title>
        <authorList>
            <person name="Ghaemmaghami S."/>
            <person name="Huh W.-K."/>
            <person name="Bower K."/>
            <person name="Howson R.W."/>
            <person name="Belle A."/>
            <person name="Dephoure N."/>
            <person name="O'Shea E.K."/>
            <person name="Weissman J.S."/>
        </authorList>
    </citation>
    <scope>LEVEL OF PROTEIN EXPRESSION [LARGE SCALE ANALYSIS]</scope>
</reference>
<reference key="9">
    <citation type="journal article" date="2007" name="J. Proteome Res.">
        <title>Large-scale phosphorylation analysis of alpha-factor-arrested Saccharomyces cerevisiae.</title>
        <authorList>
            <person name="Li X."/>
            <person name="Gerber S.A."/>
            <person name="Rudner A.D."/>
            <person name="Beausoleil S.A."/>
            <person name="Haas W."/>
            <person name="Villen J."/>
            <person name="Elias J.E."/>
            <person name="Gygi S.P."/>
        </authorList>
    </citation>
    <scope>PHOSPHORYLATION [LARGE SCALE ANALYSIS] AT SER-41; SER-44; SER-366 AND SER-379</scope>
    <scope>IDENTIFICATION BY MASS SPECTROMETRY [LARGE SCALE ANALYSIS]</scope>
    <source>
        <strain>ADR376</strain>
    </source>
</reference>
<reference key="10">
    <citation type="journal article" date="2008" name="Mol. Cell. Proteomics">
        <title>A multidimensional chromatography technology for in-depth phosphoproteome analysis.</title>
        <authorList>
            <person name="Albuquerque C.P."/>
            <person name="Smolka M.B."/>
            <person name="Payne S.H."/>
            <person name="Bafna V."/>
            <person name="Eng J."/>
            <person name="Zhou H."/>
        </authorList>
    </citation>
    <scope>PHOSPHORYLATION [LARGE SCALE ANALYSIS] AT SER-41; SER-44; SER-366; SER-372 AND SER-379</scope>
    <scope>IDENTIFICATION BY MASS SPECTROMETRY [LARGE SCALE ANALYSIS]</scope>
</reference>
<reference key="11">
    <citation type="journal article" date="2009" name="Science">
        <title>Global analysis of Cdk1 substrate phosphorylation sites provides insights into evolution.</title>
        <authorList>
            <person name="Holt L.J."/>
            <person name="Tuch B.B."/>
            <person name="Villen J."/>
            <person name="Johnson A.D."/>
            <person name="Gygi S.P."/>
            <person name="Morgan D.O."/>
        </authorList>
    </citation>
    <scope>PHOSPHORYLATION [LARGE SCALE ANALYSIS] AT SER-41; SER-44; SER-366; SER-372 AND SER-379</scope>
    <scope>IDENTIFICATION BY MASS SPECTROMETRY [LARGE SCALE ANALYSIS]</scope>
</reference>
<organism>
    <name type="scientific">Saccharomyces cerevisiae (strain ATCC 204508 / S288c)</name>
    <name type="common">Baker's yeast</name>
    <dbReference type="NCBI Taxonomy" id="559292"/>
    <lineage>
        <taxon>Eukaryota</taxon>
        <taxon>Fungi</taxon>
        <taxon>Dikarya</taxon>
        <taxon>Ascomycota</taxon>
        <taxon>Saccharomycotina</taxon>
        <taxon>Saccharomycetes</taxon>
        <taxon>Saccharomycetales</taxon>
        <taxon>Saccharomycetaceae</taxon>
        <taxon>Saccharomyces</taxon>
    </lineage>
</organism>
<name>BFR2_YEAST</name>
<comment type="function">
    <text evidence="5">Involved in endoplasmic reticulum to Golgi transport. Involved in a protein-transport step blocked by brefeldin A, which disrupts the Golgi apparatus and its incoming protein flux. May also be involved for mass growth or cell proliferation.</text>
</comment>
<comment type="interaction">
    <interactant intactId="EBI-36432">
        <id>Q06631</id>
    </interactant>
    <interactant intactId="EBI-23354">
        <id>P48234</id>
        <label>ENP2</label>
    </interactant>
    <organismsDiffer>false</organismsDiffer>
    <experiments>14</experiments>
</comment>
<comment type="interaction">
    <interactant intactId="EBI-36432">
        <id>Q06631</id>
    </interactant>
    <interactant intactId="EBI-5612">
        <id>P20448</id>
        <label>HCA4</label>
    </interactant>
    <organismsDiffer>false</organismsDiffer>
    <experiments>6</experiments>
</comment>
<comment type="interaction">
    <interactant intactId="EBI-36432">
        <id>Q06631</id>
    </interactant>
    <interactant intactId="EBI-10103">
        <id>P40079</id>
        <label>LCP5</label>
    </interactant>
    <organismsDiffer>false</organismsDiffer>
    <experiments>7</experiments>
</comment>
<comment type="interaction">
    <interactant intactId="EBI-36432">
        <id>Q06631</id>
    </interactant>
    <interactant intactId="EBI-11168">
        <id>P47083</id>
        <label>MPP10</label>
    </interactant>
    <organismsDiffer>false</organismsDiffer>
    <experiments>9</experiments>
</comment>
<comment type="subcellular location">
    <subcellularLocation>
        <location evidence="3">Nucleus</location>
        <location evidence="3">Nucleolus</location>
    </subcellularLocation>
</comment>
<comment type="induction">
    <text evidence="6">Up-regulated during cold stress and following nutrient replenishment by dilution of cells fron exhausted to fresh minimal medium.</text>
</comment>
<comment type="miscellaneous">
    <text evidence="4">Present with 15400 molecules/cell in log phase SD medium.</text>
</comment>
<comment type="similarity">
    <text evidence="7">Belongs to the AATF family.</text>
</comment>
<gene>
    <name type="primary">BFR2</name>
    <name type="ordered locus">YDR299W</name>
</gene>
<keyword id="KW-0002">3D-structure</keyword>
<keyword id="KW-0175">Coiled coil</keyword>
<keyword id="KW-0931">ER-Golgi transport</keyword>
<keyword id="KW-0539">Nucleus</keyword>
<keyword id="KW-0597">Phosphoprotein</keyword>
<keyword id="KW-0653">Protein transport</keyword>
<keyword id="KW-1185">Reference proteome</keyword>
<keyword id="KW-0813">Transport</keyword>
<proteinExistence type="evidence at protein level"/>
<feature type="chain" id="PRO_0000056634" description="Protein BFR2">
    <location>
        <begin position="1"/>
        <end position="534"/>
    </location>
</feature>
<feature type="region of interest" description="Disordered" evidence="2">
    <location>
        <begin position="27"/>
        <end position="148"/>
    </location>
</feature>
<feature type="coiled-coil region" evidence="1">
    <location>
        <begin position="86"/>
        <end position="161"/>
    </location>
</feature>
<feature type="compositionally biased region" description="Basic and acidic residues" evidence="2">
    <location>
        <begin position="52"/>
        <end position="77"/>
    </location>
</feature>
<feature type="compositionally biased region" description="Acidic residues" evidence="2">
    <location>
        <begin position="93"/>
        <end position="114"/>
    </location>
</feature>
<feature type="compositionally biased region" description="Acidic residues" evidence="2">
    <location>
        <begin position="121"/>
        <end position="142"/>
    </location>
</feature>
<feature type="modified residue" description="Phosphoserine" evidence="8 9 10">
    <location>
        <position position="41"/>
    </location>
</feature>
<feature type="modified residue" description="Phosphoserine" evidence="8 9 10">
    <location>
        <position position="44"/>
    </location>
</feature>
<feature type="modified residue" description="Phosphoserine" evidence="8 9 10">
    <location>
        <position position="366"/>
    </location>
</feature>
<feature type="modified residue" description="Phosphoserine" evidence="9 10">
    <location>
        <position position="372"/>
    </location>
</feature>
<feature type="modified residue" description="Phosphoserine" evidence="8 9 10">
    <location>
        <position position="379"/>
    </location>
</feature>
<feature type="sequence conflict" description="In Ref. 3; AAU09706." evidence="7" ref="3">
    <original>K</original>
    <variation>R</variation>
    <location>
        <position position="451"/>
    </location>
</feature>
<sequence>MEKSLADQISDIAIKPVNKDFDIEDEENASLFQHNEKNGESDLSDYGNSNTEETKKAHYLEVEKSKLRAEKGLELNDPKYTGVKGSRQALYEEVSENEDEEEEEEEEEEKEEDALSFRTDSEDEEVEIDEEESDADGGETEEAQQKRHALSKLIQQETKQAINKLSQSVQRDASKGYSILQQTKLFDNIIDLRIKLQKAVIAANKLPLTTESWEEAKMDDSEETKRLLKENEKLFNNLFNRLINFRIKFQLGDHITQNEEVAKHKLSKKRSLKELYQETNSLDSELKEYRTAVLNKWSTKVSSASGNAALSSNKFKAINLPADVQVENQLSDMSRLMKRTKLNRRNITPLYFQKDCANGRLPELISPVVKDSVDDNENSDDGLDIPKNYDPRRKDNNAIDITENPYVFDDEDFYRVLLNDLIDKKISNAHNSESAAITITSTNARSNNKLKKNIDTKASKGRKLNYSVQDPIANYEAPITSGYKWSDDQIDEFFAGLLGQRVNFNENEDEEQHARIENDEELEAVKNDDIQIFG</sequence>
<protein>
    <recommendedName>
        <fullName>Protein BFR2</fullName>
    </recommendedName>
    <alternativeName>
        <fullName>Brefeldin A resistance protein 2</fullName>
    </alternativeName>
</protein>
<accession>Q06631</accession>
<accession>D6VSS8</accession>
<accession>Q66RD8</accession>
<evidence type="ECO:0000255" key="1"/>
<evidence type="ECO:0000256" key="2">
    <source>
        <dbReference type="SAM" id="MobiDB-lite"/>
    </source>
</evidence>
<evidence type="ECO:0000269" key="3">
    <source>
    </source>
</evidence>
<evidence type="ECO:0000269" key="4">
    <source>
    </source>
</evidence>
<evidence type="ECO:0000269" key="5">
    <source>
    </source>
</evidence>
<evidence type="ECO:0000269" key="6">
    <source>
    </source>
</evidence>
<evidence type="ECO:0000305" key="7"/>
<evidence type="ECO:0007744" key="8">
    <source>
    </source>
</evidence>
<evidence type="ECO:0007744" key="9">
    <source>
    </source>
</evidence>
<evidence type="ECO:0007744" key="10">
    <source>
    </source>
</evidence>